<sequence>KFLQIAVEEHYQSFDKNNIRDVTDSLWRSKKTKPRGAADPNEKIINLVNDIFGAGFDTVTTALSWSLMYLVTQPHSQKKIQESELDTAIGRERRSWLSERSMLPYKEAFILETVPTWQFVPFTIPHSTTRDTTLNGFHIPKECCVFVNQWQVNHEAELWEDPFVFRTERFLTDDSTAIDKTLSEKVMGKQVGLAWKSALGTRQWEVSFYLSTLTPNWSSAPGGESKKDRVRPIYGLSMKHKRCEHFQVKKRFSMKSSN</sequence>
<protein>
    <recommendedName>
        <fullName>Cytochrome P450 1A2</fullName>
        <ecNumber>1.14.14.1</ecNumber>
    </recommendedName>
    <alternativeName>
        <fullName>CYPIA2</fullName>
    </alternativeName>
</protein>
<dbReference type="EC" id="1.14.14.1"/>
<dbReference type="EMBL" id="M64537">
    <property type="protein sequence ID" value="AAA62735.1"/>
    <property type="molecule type" value="mRNA"/>
</dbReference>
<dbReference type="PIR" id="JT0575">
    <property type="entry name" value="JT0575"/>
</dbReference>
<dbReference type="SMR" id="Q01741"/>
<dbReference type="FunCoup" id="Q01741">
    <property type="interactions" value="77"/>
</dbReference>
<dbReference type="VEuPathDB" id="HostDB:geneid_396051"/>
<dbReference type="InParanoid" id="Q01741"/>
<dbReference type="PhylomeDB" id="Q01741"/>
<dbReference type="Proteomes" id="UP000000539">
    <property type="component" value="Unassembled WGS sequence"/>
</dbReference>
<dbReference type="GO" id="GO:0005789">
    <property type="term" value="C:endoplasmic reticulum membrane"/>
    <property type="evidence" value="ECO:0007669"/>
    <property type="project" value="UniProtKB-SubCell"/>
</dbReference>
<dbReference type="GO" id="GO:0020037">
    <property type="term" value="F:heme binding"/>
    <property type="evidence" value="ECO:0007669"/>
    <property type="project" value="InterPro"/>
</dbReference>
<dbReference type="GO" id="GO:0005506">
    <property type="term" value="F:iron ion binding"/>
    <property type="evidence" value="ECO:0007669"/>
    <property type="project" value="InterPro"/>
</dbReference>
<dbReference type="GO" id="GO:0016712">
    <property type="term" value="F:oxidoreductase activity, acting on paired donors, with incorporation or reduction of molecular oxygen, reduced flavin or flavoprotein as one donor, and incorporation of one atom of oxygen"/>
    <property type="evidence" value="ECO:0007669"/>
    <property type="project" value="UniProtKB-EC"/>
</dbReference>
<dbReference type="Gene3D" id="1.10.630.10">
    <property type="entry name" value="Cytochrome P450"/>
    <property type="match status" value="1"/>
</dbReference>
<dbReference type="InterPro" id="IPR001128">
    <property type="entry name" value="Cyt_P450"/>
</dbReference>
<dbReference type="InterPro" id="IPR002401">
    <property type="entry name" value="Cyt_P450_E_grp-I"/>
</dbReference>
<dbReference type="InterPro" id="IPR036396">
    <property type="entry name" value="Cyt_P450_sf"/>
</dbReference>
<dbReference type="PANTHER" id="PTHR24289:SF21">
    <property type="entry name" value="CYTOCHROME P450 1A"/>
    <property type="match status" value="1"/>
</dbReference>
<dbReference type="PANTHER" id="PTHR24289">
    <property type="entry name" value="STEROID 17-ALPHA-HYDROXYLASE/17,20 LYASE"/>
    <property type="match status" value="1"/>
</dbReference>
<dbReference type="Pfam" id="PF00067">
    <property type="entry name" value="p450"/>
    <property type="match status" value="1"/>
</dbReference>
<dbReference type="PRINTS" id="PR00463">
    <property type="entry name" value="EP450I"/>
</dbReference>
<dbReference type="SUPFAM" id="SSF48264">
    <property type="entry name" value="Cytochrome P450"/>
    <property type="match status" value="1"/>
</dbReference>
<comment type="function">
    <text>Cytochromes P450 are a group of heme-thiolate monooxygenases. In liver microsomes, this enzyme is involved in an NADPH-dependent electron transport pathway. It oxidizes a variety of structurally unrelated compounds, including steroids, fatty acids, and xenobiotics.</text>
</comment>
<comment type="catalytic activity">
    <reaction>
        <text>an organic molecule + reduced [NADPH--hemoprotein reductase] + O2 = an alcohol + oxidized [NADPH--hemoprotein reductase] + H2O + H(+)</text>
        <dbReference type="Rhea" id="RHEA:17149"/>
        <dbReference type="Rhea" id="RHEA-COMP:11964"/>
        <dbReference type="Rhea" id="RHEA-COMP:11965"/>
        <dbReference type="ChEBI" id="CHEBI:15377"/>
        <dbReference type="ChEBI" id="CHEBI:15378"/>
        <dbReference type="ChEBI" id="CHEBI:15379"/>
        <dbReference type="ChEBI" id="CHEBI:30879"/>
        <dbReference type="ChEBI" id="CHEBI:57618"/>
        <dbReference type="ChEBI" id="CHEBI:58210"/>
        <dbReference type="ChEBI" id="CHEBI:142491"/>
        <dbReference type="EC" id="1.14.14.1"/>
    </reaction>
</comment>
<comment type="cofactor">
    <cofactor evidence="1">
        <name>heme</name>
        <dbReference type="ChEBI" id="CHEBI:30413"/>
    </cofactor>
</comment>
<comment type="subcellular location">
    <subcellularLocation>
        <location>Endoplasmic reticulum membrane</location>
        <topology>Peripheral membrane protein</topology>
    </subcellularLocation>
    <subcellularLocation>
        <location>Microsome membrane</location>
        <topology>Peripheral membrane protein</topology>
    </subcellularLocation>
</comment>
<comment type="induction">
    <text>By 3-methylcholanthrene (3MC) and estradiol-17-beta.</text>
</comment>
<comment type="similarity">
    <text evidence="2">Belongs to the cytochrome P450 family.</text>
</comment>
<organism>
    <name type="scientific">Gallus gallus</name>
    <name type="common">Chicken</name>
    <dbReference type="NCBI Taxonomy" id="9031"/>
    <lineage>
        <taxon>Eukaryota</taxon>
        <taxon>Metazoa</taxon>
        <taxon>Chordata</taxon>
        <taxon>Craniata</taxon>
        <taxon>Vertebrata</taxon>
        <taxon>Euteleostomi</taxon>
        <taxon>Archelosauria</taxon>
        <taxon>Archosauria</taxon>
        <taxon>Dinosauria</taxon>
        <taxon>Saurischia</taxon>
        <taxon>Theropoda</taxon>
        <taxon>Coelurosauria</taxon>
        <taxon>Aves</taxon>
        <taxon>Neognathae</taxon>
        <taxon>Galloanserae</taxon>
        <taxon>Galliformes</taxon>
        <taxon>Phasianidae</taxon>
        <taxon>Phasianinae</taxon>
        <taxon>Gallus</taxon>
    </lineage>
</organism>
<gene>
    <name type="primary">CYP1A2</name>
</gene>
<proteinExistence type="evidence at transcript level"/>
<feature type="chain" id="PRO_0000051657" description="Cytochrome P450 1A2">
    <location>
        <begin position="1" status="less than"/>
        <end position="258"/>
    </location>
</feature>
<feature type="non-terminal residue">
    <location>
        <position position="1"/>
    </location>
</feature>
<evidence type="ECO:0000250" key="1"/>
<evidence type="ECO:0000305" key="2"/>
<accession>Q01741</accession>
<keyword id="KW-0256">Endoplasmic reticulum</keyword>
<keyword id="KW-0349">Heme</keyword>
<keyword id="KW-0408">Iron</keyword>
<keyword id="KW-0472">Membrane</keyword>
<keyword id="KW-0479">Metal-binding</keyword>
<keyword id="KW-0492">Microsome</keyword>
<keyword id="KW-0503">Monooxygenase</keyword>
<keyword id="KW-0560">Oxidoreductase</keyword>
<keyword id="KW-1185">Reference proteome</keyword>
<name>CP1A2_CHICK</name>
<reference key="1">
    <citation type="journal article" date="1991" name="Biochem. Biophys. Res. Commun.">
        <title>Estradiol-17 beta induces polyaromatic hydrocarbon-inducible cytochrome P-450 in chicken liver.</title>
        <authorList>
            <person name="Murti J.R."/>
            <person name="Adiga P.R."/>
            <person name="Padmanaban G."/>
        </authorList>
    </citation>
    <scope>NUCLEOTIDE SEQUENCE [MRNA]</scope>
    <source>
        <tissue>Liver</tissue>
    </source>
</reference>